<dbReference type="EC" id="3.1.11.6" evidence="1"/>
<dbReference type="EMBL" id="CP000510">
    <property type="protein sequence ID" value="ABM03979.1"/>
    <property type="molecule type" value="Genomic_DNA"/>
</dbReference>
<dbReference type="RefSeq" id="WP_011770539.1">
    <property type="nucleotide sequence ID" value="NC_008709.1"/>
</dbReference>
<dbReference type="SMR" id="A1SWW4"/>
<dbReference type="STRING" id="357804.Ping_2238"/>
<dbReference type="KEGG" id="pin:Ping_2238"/>
<dbReference type="eggNOG" id="COG1722">
    <property type="taxonomic scope" value="Bacteria"/>
</dbReference>
<dbReference type="HOGENOM" id="CLU_145918_3_3_6"/>
<dbReference type="OrthoDB" id="5591562at2"/>
<dbReference type="Proteomes" id="UP000000639">
    <property type="component" value="Chromosome"/>
</dbReference>
<dbReference type="GO" id="GO:0005829">
    <property type="term" value="C:cytosol"/>
    <property type="evidence" value="ECO:0007669"/>
    <property type="project" value="TreeGrafter"/>
</dbReference>
<dbReference type="GO" id="GO:0009318">
    <property type="term" value="C:exodeoxyribonuclease VII complex"/>
    <property type="evidence" value="ECO:0007669"/>
    <property type="project" value="InterPro"/>
</dbReference>
<dbReference type="GO" id="GO:0008855">
    <property type="term" value="F:exodeoxyribonuclease VII activity"/>
    <property type="evidence" value="ECO:0007669"/>
    <property type="project" value="UniProtKB-UniRule"/>
</dbReference>
<dbReference type="GO" id="GO:0006308">
    <property type="term" value="P:DNA catabolic process"/>
    <property type="evidence" value="ECO:0007669"/>
    <property type="project" value="UniProtKB-UniRule"/>
</dbReference>
<dbReference type="Gene3D" id="1.10.287.1040">
    <property type="entry name" value="Exonuclease VII, small subunit"/>
    <property type="match status" value="1"/>
</dbReference>
<dbReference type="HAMAP" id="MF_00337">
    <property type="entry name" value="Exonuc_7_S"/>
    <property type="match status" value="1"/>
</dbReference>
<dbReference type="InterPro" id="IPR003761">
    <property type="entry name" value="Exonuc_VII_S"/>
</dbReference>
<dbReference type="InterPro" id="IPR037004">
    <property type="entry name" value="Exonuc_VII_ssu_sf"/>
</dbReference>
<dbReference type="NCBIfam" id="NF002137">
    <property type="entry name" value="PRK00977.1-1"/>
    <property type="match status" value="1"/>
</dbReference>
<dbReference type="NCBIfam" id="NF002140">
    <property type="entry name" value="PRK00977.1-4"/>
    <property type="match status" value="1"/>
</dbReference>
<dbReference type="NCBIfam" id="TIGR01280">
    <property type="entry name" value="xseB"/>
    <property type="match status" value="1"/>
</dbReference>
<dbReference type="PANTHER" id="PTHR34137">
    <property type="entry name" value="EXODEOXYRIBONUCLEASE 7 SMALL SUBUNIT"/>
    <property type="match status" value="1"/>
</dbReference>
<dbReference type="PANTHER" id="PTHR34137:SF1">
    <property type="entry name" value="EXODEOXYRIBONUCLEASE 7 SMALL SUBUNIT"/>
    <property type="match status" value="1"/>
</dbReference>
<dbReference type="Pfam" id="PF02609">
    <property type="entry name" value="Exonuc_VII_S"/>
    <property type="match status" value="1"/>
</dbReference>
<dbReference type="PIRSF" id="PIRSF006488">
    <property type="entry name" value="Exonuc_VII_S"/>
    <property type="match status" value="1"/>
</dbReference>
<dbReference type="SUPFAM" id="SSF116842">
    <property type="entry name" value="XseB-like"/>
    <property type="match status" value="1"/>
</dbReference>
<comment type="function">
    <text evidence="1">Bidirectionally degrades single-stranded DNA into large acid-insoluble oligonucleotides, which are then degraded further into small acid-soluble oligonucleotides.</text>
</comment>
<comment type="catalytic activity">
    <reaction evidence="1">
        <text>Exonucleolytic cleavage in either 5'- to 3'- or 3'- to 5'-direction to yield nucleoside 5'-phosphates.</text>
        <dbReference type="EC" id="3.1.11.6"/>
    </reaction>
</comment>
<comment type="subunit">
    <text evidence="1">Heterooligomer composed of large and small subunits.</text>
</comment>
<comment type="subcellular location">
    <subcellularLocation>
        <location evidence="1">Cytoplasm</location>
    </subcellularLocation>
</comment>
<comment type="similarity">
    <text evidence="1">Belongs to the XseB family.</text>
</comment>
<evidence type="ECO:0000255" key="1">
    <source>
        <dbReference type="HAMAP-Rule" id="MF_00337"/>
    </source>
</evidence>
<name>EX7S_PSYIN</name>
<gene>
    <name evidence="1" type="primary">xseB</name>
    <name type="ordered locus">Ping_2238</name>
</gene>
<sequence length="78" mass="8960">MALKKPENMHYEEAIDELENIVNHLEVGDLALEDALKQFERGIALARSNNQKLQKAQQQVNILMQQDAQAPLQEFNDE</sequence>
<organism>
    <name type="scientific">Psychromonas ingrahamii (strain DSM 17664 / CCUG 51855 / 37)</name>
    <dbReference type="NCBI Taxonomy" id="357804"/>
    <lineage>
        <taxon>Bacteria</taxon>
        <taxon>Pseudomonadati</taxon>
        <taxon>Pseudomonadota</taxon>
        <taxon>Gammaproteobacteria</taxon>
        <taxon>Alteromonadales</taxon>
        <taxon>Psychromonadaceae</taxon>
        <taxon>Psychromonas</taxon>
    </lineage>
</organism>
<accession>A1SWW4</accession>
<reference key="1">
    <citation type="journal article" date="2008" name="BMC Genomics">
        <title>Genomics of an extreme psychrophile, Psychromonas ingrahamii.</title>
        <authorList>
            <person name="Riley M."/>
            <person name="Staley J.T."/>
            <person name="Danchin A."/>
            <person name="Wang T.Z."/>
            <person name="Brettin T.S."/>
            <person name="Hauser L.J."/>
            <person name="Land M.L."/>
            <person name="Thompson L.S."/>
        </authorList>
    </citation>
    <scope>NUCLEOTIDE SEQUENCE [LARGE SCALE GENOMIC DNA]</scope>
    <source>
        <strain>DSM 17664 / CCUG 51855 / 37</strain>
    </source>
</reference>
<protein>
    <recommendedName>
        <fullName evidence="1">Exodeoxyribonuclease 7 small subunit</fullName>
        <ecNumber evidence="1">3.1.11.6</ecNumber>
    </recommendedName>
    <alternativeName>
        <fullName evidence="1">Exodeoxyribonuclease VII small subunit</fullName>
        <shortName evidence="1">Exonuclease VII small subunit</shortName>
    </alternativeName>
</protein>
<keyword id="KW-0963">Cytoplasm</keyword>
<keyword id="KW-0269">Exonuclease</keyword>
<keyword id="KW-0378">Hydrolase</keyword>
<keyword id="KW-0540">Nuclease</keyword>
<keyword id="KW-1185">Reference proteome</keyword>
<feature type="chain" id="PRO_0000303739" description="Exodeoxyribonuclease 7 small subunit">
    <location>
        <begin position="1"/>
        <end position="78"/>
    </location>
</feature>
<proteinExistence type="inferred from homology"/>